<evidence type="ECO:0000255" key="1"/>
<evidence type="ECO:0000303" key="2">
    <source>
    </source>
</evidence>
<evidence type="ECO:0000305" key="3"/>
<proteinExistence type="evidence at protein level"/>
<name>LYPD4_HUMAN</name>
<feature type="signal peptide" evidence="1">
    <location>
        <begin position="1"/>
        <end position="26"/>
    </location>
</feature>
<feature type="chain" id="PRO_0000226759" description="Ly6/PLAUR domain-containing protein 4">
    <location>
        <begin position="27"/>
        <end position="225"/>
    </location>
</feature>
<feature type="propeptide" id="PRO_0000226760" description="Removed in mature form" evidence="1">
    <location>
        <begin position="226"/>
        <end position="246"/>
    </location>
</feature>
<feature type="domain" description="UPAR/Ly6">
    <location>
        <begin position="142"/>
        <end position="223"/>
    </location>
</feature>
<feature type="lipid moiety-binding region" description="GPI-anchor amidated alanine" evidence="1">
    <location>
        <position position="225"/>
    </location>
</feature>
<feature type="glycosylation site" description="N-linked (GlcNAc...) asparagine" evidence="1">
    <location>
        <position position="117"/>
    </location>
</feature>
<feature type="splice variant" id="VSP_017506" description="In isoform 2." evidence="2">
    <original>AGALLCYEATASRFRAVAFHNWKWLLMRNMVCKLQEGCEETLVFIET</original>
    <variation>MSCGAGCYKTQK</variation>
    <location>
        <begin position="24"/>
        <end position="70"/>
    </location>
</feature>
<feature type="sequence variant" id="VAR_052703" description="In dbSNP:rs35476281.">
    <original>T</original>
    <variation>S</variation>
    <location>
        <position position="184"/>
    </location>
</feature>
<feature type="sequence conflict" description="In Ref. 1; AAQ89088." evidence="3" ref="1">
    <original>S</original>
    <variation>P</variation>
    <location>
        <position position="19"/>
    </location>
</feature>
<gene>
    <name type="primary">LYPD4</name>
    <name type="ORF">UNQ2552/PRO6181</name>
</gene>
<sequence>MGPQHLRLVQLFCLLGAISTLPRAGALLCYEATASRFRAVAFHNWKWLLMRNMVCKLQEGCEETLVFIETGTARGVVGFKGCSSSSSYPAQISYLVSPPGVSIASYSRVCRSYLCNNLTNLEPFVKLKASTPKSITSASCSCPTCVGEHMKDCLPNFVTTNSCPLAASTCYSSTLKFQAGFLNTTFLLMGCAREHNQLLADFHHIGSIKVTEVLNILEKSQIVGAASSRQDPAWGVVLGLLFAFRD</sequence>
<accession>Q6UWN0</accession>
<accession>Q8IYW0</accession>
<comment type="subcellular location">
    <subcellularLocation>
        <location evidence="3">Cell membrane</location>
        <topology evidence="3">Lipid-anchor</topology>
        <topology evidence="3">GPI-anchor</topology>
    </subcellularLocation>
</comment>
<comment type="alternative products">
    <event type="alternative splicing"/>
    <isoform>
        <id>Q6UWN0-1</id>
        <name>1</name>
        <sequence type="displayed"/>
    </isoform>
    <isoform>
        <id>Q6UWN0-2</id>
        <name>2</name>
        <sequence type="described" ref="VSP_017506"/>
    </isoform>
</comment>
<reference key="1">
    <citation type="journal article" date="2003" name="Genome Res.">
        <title>The secreted protein discovery initiative (SPDI), a large-scale effort to identify novel human secreted and transmembrane proteins: a bioinformatics assessment.</title>
        <authorList>
            <person name="Clark H.F."/>
            <person name="Gurney A.L."/>
            <person name="Abaya E."/>
            <person name="Baker K."/>
            <person name="Baldwin D.T."/>
            <person name="Brush J."/>
            <person name="Chen J."/>
            <person name="Chow B."/>
            <person name="Chui C."/>
            <person name="Crowley C."/>
            <person name="Currell B."/>
            <person name="Deuel B."/>
            <person name="Dowd P."/>
            <person name="Eaton D."/>
            <person name="Foster J.S."/>
            <person name="Grimaldi C."/>
            <person name="Gu Q."/>
            <person name="Hass P.E."/>
            <person name="Heldens S."/>
            <person name="Huang A."/>
            <person name="Kim H.S."/>
            <person name="Klimowski L."/>
            <person name="Jin Y."/>
            <person name="Johnson S."/>
            <person name="Lee J."/>
            <person name="Lewis L."/>
            <person name="Liao D."/>
            <person name="Mark M.R."/>
            <person name="Robbie E."/>
            <person name="Sanchez C."/>
            <person name="Schoenfeld J."/>
            <person name="Seshagiri S."/>
            <person name="Simmons L."/>
            <person name="Singh J."/>
            <person name="Smith V."/>
            <person name="Stinson J."/>
            <person name="Vagts A."/>
            <person name="Vandlen R.L."/>
            <person name="Watanabe C."/>
            <person name="Wieand D."/>
            <person name="Woods K."/>
            <person name="Xie M.-H."/>
            <person name="Yansura D.G."/>
            <person name="Yi S."/>
            <person name="Yu G."/>
            <person name="Yuan J."/>
            <person name="Zhang M."/>
            <person name="Zhang Z."/>
            <person name="Goddard A.D."/>
            <person name="Wood W.I."/>
            <person name="Godowski P.J."/>
            <person name="Gray A.M."/>
        </authorList>
    </citation>
    <scope>NUCLEOTIDE SEQUENCE [LARGE SCALE MRNA] (ISOFORM 1)</scope>
</reference>
<reference key="2">
    <citation type="journal article" date="2004" name="Genome Res.">
        <title>The status, quality, and expansion of the NIH full-length cDNA project: the Mammalian Gene Collection (MGC).</title>
        <authorList>
            <consortium name="The MGC Project Team"/>
        </authorList>
    </citation>
    <scope>NUCLEOTIDE SEQUENCE [LARGE SCALE MRNA] (ISOFORM 2)</scope>
    <source>
        <tissue>Testis</tissue>
    </source>
</reference>
<protein>
    <recommendedName>
        <fullName>Ly6/PLAUR domain-containing protein 4</fullName>
    </recommendedName>
</protein>
<keyword id="KW-0025">Alternative splicing</keyword>
<keyword id="KW-1003">Cell membrane</keyword>
<keyword id="KW-0325">Glycoprotein</keyword>
<keyword id="KW-0336">GPI-anchor</keyword>
<keyword id="KW-0449">Lipoprotein</keyword>
<keyword id="KW-0472">Membrane</keyword>
<keyword id="KW-1267">Proteomics identification</keyword>
<keyword id="KW-1185">Reference proteome</keyword>
<keyword id="KW-0677">Repeat</keyword>
<keyword id="KW-0732">Signal</keyword>
<organism>
    <name type="scientific">Homo sapiens</name>
    <name type="common">Human</name>
    <dbReference type="NCBI Taxonomy" id="9606"/>
    <lineage>
        <taxon>Eukaryota</taxon>
        <taxon>Metazoa</taxon>
        <taxon>Chordata</taxon>
        <taxon>Craniata</taxon>
        <taxon>Vertebrata</taxon>
        <taxon>Euteleostomi</taxon>
        <taxon>Mammalia</taxon>
        <taxon>Eutheria</taxon>
        <taxon>Euarchontoglires</taxon>
        <taxon>Primates</taxon>
        <taxon>Haplorrhini</taxon>
        <taxon>Catarrhini</taxon>
        <taxon>Hominidae</taxon>
        <taxon>Homo</taxon>
    </lineage>
</organism>
<dbReference type="EMBL" id="AY358726">
    <property type="protein sequence ID" value="AAQ89088.1"/>
    <property type="molecule type" value="mRNA"/>
</dbReference>
<dbReference type="EMBL" id="BC034629">
    <property type="protein sequence ID" value="AAH34629.1"/>
    <property type="molecule type" value="mRNA"/>
</dbReference>
<dbReference type="CCDS" id="CCDS12587.1">
    <molecule id="Q6UWN0-1"/>
</dbReference>
<dbReference type="CCDS" id="CCDS77303.1">
    <molecule id="Q6UWN0-2"/>
</dbReference>
<dbReference type="RefSeq" id="NP_001278348.1">
    <molecule id="Q6UWN0-2"/>
    <property type="nucleotide sequence ID" value="NM_001291419.2"/>
</dbReference>
<dbReference type="RefSeq" id="NP_775777.3">
    <molecule id="Q6UWN0-1"/>
    <property type="nucleotide sequence ID" value="NM_173506.6"/>
</dbReference>
<dbReference type="RefSeq" id="XP_024307141.1">
    <molecule id="Q6UWN0-1"/>
    <property type="nucleotide sequence ID" value="XM_024451373.2"/>
</dbReference>
<dbReference type="RefSeq" id="XP_054175845.1">
    <molecule id="Q6UWN0-1"/>
    <property type="nucleotide sequence ID" value="XM_054319870.1"/>
</dbReference>
<dbReference type="SMR" id="Q6UWN0"/>
<dbReference type="BioGRID" id="127081">
    <property type="interactions" value="139"/>
</dbReference>
<dbReference type="FunCoup" id="Q6UWN0">
    <property type="interactions" value="73"/>
</dbReference>
<dbReference type="IntAct" id="Q6UWN0">
    <property type="interactions" value="121"/>
</dbReference>
<dbReference type="STRING" id="9606.ENSP00000476510"/>
<dbReference type="GlyCosmos" id="Q6UWN0">
    <property type="glycosylation" value="1 site, No reported glycans"/>
</dbReference>
<dbReference type="GlyGen" id="Q6UWN0">
    <property type="glycosylation" value="1 site"/>
</dbReference>
<dbReference type="iPTMnet" id="Q6UWN0"/>
<dbReference type="PhosphoSitePlus" id="Q6UWN0"/>
<dbReference type="BioMuta" id="LYPD4"/>
<dbReference type="DMDM" id="92058726"/>
<dbReference type="jPOST" id="Q6UWN0"/>
<dbReference type="MassIVE" id="Q6UWN0"/>
<dbReference type="PaxDb" id="9606-ENSP00000476510"/>
<dbReference type="PeptideAtlas" id="Q6UWN0"/>
<dbReference type="ProteomicsDB" id="67502">
    <molecule id="Q6UWN0-1"/>
</dbReference>
<dbReference type="ProteomicsDB" id="67503">
    <molecule id="Q6UWN0-2"/>
</dbReference>
<dbReference type="Antibodypedia" id="72432">
    <property type="antibodies" value="101 antibodies from 16 providers"/>
</dbReference>
<dbReference type="DNASU" id="147719"/>
<dbReference type="Ensembl" id="ENST00000343055.5">
    <molecule id="Q6UWN0-2"/>
    <property type="protein sequence ID" value="ENSP00000339568.4"/>
    <property type="gene ID" value="ENSG00000273111.6"/>
</dbReference>
<dbReference type="Ensembl" id="ENST00000601246.5">
    <molecule id="Q6UWN0-2"/>
    <property type="protein sequence ID" value="ENSP00000472570.1"/>
    <property type="gene ID" value="ENSG00000273111.6"/>
</dbReference>
<dbReference type="Ensembl" id="ENST00000609812.6">
    <molecule id="Q6UWN0-1"/>
    <property type="protein sequence ID" value="ENSP00000476510.1"/>
    <property type="gene ID" value="ENSG00000273111.6"/>
</dbReference>
<dbReference type="GeneID" id="147719"/>
<dbReference type="KEGG" id="hsa:147719"/>
<dbReference type="MANE-Select" id="ENST00000609812.6">
    <property type="protein sequence ID" value="ENSP00000476510.1"/>
    <property type="RefSeq nucleotide sequence ID" value="NM_173506.7"/>
    <property type="RefSeq protein sequence ID" value="NP_775777.3"/>
</dbReference>
<dbReference type="UCSC" id="uc032hyg.2">
    <molecule id="Q6UWN0-1"/>
    <property type="organism name" value="human"/>
</dbReference>
<dbReference type="AGR" id="HGNC:28659"/>
<dbReference type="CTD" id="147719"/>
<dbReference type="DisGeNET" id="147719"/>
<dbReference type="GeneCards" id="LYPD4"/>
<dbReference type="HGNC" id="HGNC:28659">
    <property type="gene designation" value="LYPD4"/>
</dbReference>
<dbReference type="HPA" id="ENSG00000273111">
    <property type="expression patterns" value="Tissue enriched (testis)"/>
</dbReference>
<dbReference type="neXtProt" id="NX_Q6UWN0"/>
<dbReference type="OpenTargets" id="ENSG00000273111"/>
<dbReference type="PharmGKB" id="PA142671491"/>
<dbReference type="VEuPathDB" id="HostDB:ENSG00000273111"/>
<dbReference type="eggNOG" id="ENOG502RNFS">
    <property type="taxonomic scope" value="Eukaryota"/>
</dbReference>
<dbReference type="GeneTree" id="ENSGT00530000063351"/>
<dbReference type="HOGENOM" id="CLU_108759_0_0_1"/>
<dbReference type="InParanoid" id="Q6UWN0"/>
<dbReference type="OMA" id="CKLSEGC"/>
<dbReference type="OrthoDB" id="9522487at2759"/>
<dbReference type="PAN-GO" id="Q6UWN0">
    <property type="GO annotations" value="2 GO annotations based on evolutionary models"/>
</dbReference>
<dbReference type="PhylomeDB" id="Q6UWN0"/>
<dbReference type="TreeFam" id="TF337286"/>
<dbReference type="PathwayCommons" id="Q6UWN0"/>
<dbReference type="Reactome" id="R-HSA-163125">
    <property type="pathway name" value="Post-translational modification: synthesis of GPI-anchored proteins"/>
</dbReference>
<dbReference type="SignaLink" id="Q6UWN0"/>
<dbReference type="BioGRID-ORCS" id="147719">
    <property type="hits" value="17 hits in 1135 CRISPR screens"/>
</dbReference>
<dbReference type="GenomeRNAi" id="147719"/>
<dbReference type="Pharos" id="Q6UWN0">
    <property type="development level" value="Tbio"/>
</dbReference>
<dbReference type="PRO" id="PR:Q6UWN0"/>
<dbReference type="Proteomes" id="UP000005640">
    <property type="component" value="Chromosome 19"/>
</dbReference>
<dbReference type="RNAct" id="Q6UWN0">
    <property type="molecule type" value="protein"/>
</dbReference>
<dbReference type="Bgee" id="ENSG00000273111">
    <property type="expression patterns" value="Expressed in sperm and 47 other cell types or tissues"/>
</dbReference>
<dbReference type="ExpressionAtlas" id="Q6UWN0">
    <property type="expression patterns" value="baseline and differential"/>
</dbReference>
<dbReference type="GO" id="GO:0005576">
    <property type="term" value="C:extracellular region"/>
    <property type="evidence" value="ECO:0000304"/>
    <property type="project" value="Reactome"/>
</dbReference>
<dbReference type="GO" id="GO:0005886">
    <property type="term" value="C:plasma membrane"/>
    <property type="evidence" value="ECO:0000304"/>
    <property type="project" value="Reactome"/>
</dbReference>
<dbReference type="GO" id="GO:0044853">
    <property type="term" value="C:plasma membrane raft"/>
    <property type="evidence" value="ECO:0000318"/>
    <property type="project" value="GO_Central"/>
</dbReference>
<dbReference type="GO" id="GO:0098552">
    <property type="term" value="C:side of membrane"/>
    <property type="evidence" value="ECO:0007669"/>
    <property type="project" value="UniProtKB-KW"/>
</dbReference>
<dbReference type="CDD" id="cd23621">
    <property type="entry name" value="TFP_LU_ECD_LYPD4_rpt1"/>
    <property type="match status" value="1"/>
</dbReference>
<dbReference type="CDD" id="cd23635">
    <property type="entry name" value="TFP_LU_ECD_LYPD4_rpt2"/>
    <property type="match status" value="1"/>
</dbReference>
<dbReference type="InterPro" id="IPR051899">
    <property type="entry name" value="Fert-Immune_med_protein"/>
</dbReference>
<dbReference type="InterPro" id="IPR016054">
    <property type="entry name" value="LY6_UPA_recep-like"/>
</dbReference>
<dbReference type="InterPro" id="IPR045860">
    <property type="entry name" value="Snake_toxin-like_sf"/>
</dbReference>
<dbReference type="PANTHER" id="PTHR16529">
    <property type="entry name" value="CD177 ANTIGEN"/>
    <property type="match status" value="1"/>
</dbReference>
<dbReference type="PANTHER" id="PTHR16529:SF8">
    <property type="entry name" value="CD177 ANTIGEN"/>
    <property type="match status" value="1"/>
</dbReference>
<dbReference type="Pfam" id="PF00021">
    <property type="entry name" value="UPAR_LY6"/>
    <property type="match status" value="2"/>
</dbReference>
<dbReference type="SUPFAM" id="SSF57302">
    <property type="entry name" value="Snake toxin-like"/>
    <property type="match status" value="1"/>
</dbReference>